<gene>
    <name evidence="1" type="primary">prfC</name>
    <name type="ordered locus">COXBURSA331_A1140</name>
</gene>
<keyword id="KW-0963">Cytoplasm</keyword>
<keyword id="KW-0342">GTP-binding</keyword>
<keyword id="KW-0547">Nucleotide-binding</keyword>
<keyword id="KW-0648">Protein biosynthesis</keyword>
<evidence type="ECO:0000255" key="1">
    <source>
        <dbReference type="HAMAP-Rule" id="MF_00072"/>
    </source>
</evidence>
<feature type="chain" id="PRO_1000092478" description="Peptide chain release factor 3">
    <location>
        <begin position="1"/>
        <end position="525"/>
    </location>
</feature>
<feature type="domain" description="tr-type G">
    <location>
        <begin position="8"/>
        <end position="276"/>
    </location>
</feature>
<feature type="binding site" evidence="1">
    <location>
        <begin position="17"/>
        <end position="24"/>
    </location>
    <ligand>
        <name>GTP</name>
        <dbReference type="ChEBI" id="CHEBI:37565"/>
    </ligand>
</feature>
<feature type="binding site" evidence="1">
    <location>
        <begin position="85"/>
        <end position="89"/>
    </location>
    <ligand>
        <name>GTP</name>
        <dbReference type="ChEBI" id="CHEBI:37565"/>
    </ligand>
</feature>
<feature type="binding site" evidence="1">
    <location>
        <begin position="139"/>
        <end position="142"/>
    </location>
    <ligand>
        <name>GTP</name>
        <dbReference type="ChEBI" id="CHEBI:37565"/>
    </ligand>
</feature>
<protein>
    <recommendedName>
        <fullName evidence="1">Peptide chain release factor 3</fullName>
        <shortName evidence="1">RF-3</shortName>
    </recommendedName>
</protein>
<sequence length="525" mass="59477">MSVEKQTAMRRTFAIISHPDAGKTTLTEKLLLFGGAIQLAGTIKSRKAARHATSDWMELEKQRGISVTTSVMQFPYKDYLINLLDTPGHADFTEDTYRTLTAVDSALMVIDAAKGVEPRTIKLMEVCRLRHTPIMTFINKMDRDTRPSIELLDEIESILRIHCAPVTWPIGMGKYFKGIYHLIEDAIYLYQPGKHERVGESERIEGINNPELDKKLGDLASELRNEIELVKGASHPFEREGYLKGELTPIFFGSAINNFGVGELLDAFVKEAPPPQGRETNSRLVKPEEEKFSGFVFKIQANMDPGHRDRIAFLRIASGQYQKGMKAYHVRLKKEIQINNALTFMAGKRENAEEAWPGDIIGLHNHGTIQIGDTFTQGERFKFTGIPNFASELFRLVRLKDPLKQKALLKGLTQLSEEGATQLFRPLDSNELILGAVGLLQFDVVAYRLENEYNVKCVYESVNVVTARWVICDDKAVLERFNQEQSRNLAYDGGGHLTYLAPSRVNLEITMEKWPEIQFSETREH</sequence>
<reference key="1">
    <citation type="submission" date="2007-11" db="EMBL/GenBank/DDBJ databases">
        <title>Genome sequencing of phylogenetically and phenotypically diverse Coxiella burnetii isolates.</title>
        <authorList>
            <person name="Seshadri R."/>
            <person name="Samuel J.E."/>
        </authorList>
    </citation>
    <scope>NUCLEOTIDE SEQUENCE [LARGE SCALE GENOMIC DNA]</scope>
    <source>
        <strain>RSA 331 / Henzerling II</strain>
    </source>
</reference>
<name>RF3_COXBR</name>
<accession>A9NDA0</accession>
<dbReference type="EMBL" id="CP000890">
    <property type="protein sequence ID" value="ABX78566.1"/>
    <property type="molecule type" value="Genomic_DNA"/>
</dbReference>
<dbReference type="RefSeq" id="WP_005772589.1">
    <property type="nucleotide sequence ID" value="NC_010117.1"/>
</dbReference>
<dbReference type="SMR" id="A9NDA0"/>
<dbReference type="KEGG" id="cbs:COXBURSA331_A1140"/>
<dbReference type="HOGENOM" id="CLU_002794_2_1_6"/>
<dbReference type="GO" id="GO:0005829">
    <property type="term" value="C:cytosol"/>
    <property type="evidence" value="ECO:0007669"/>
    <property type="project" value="TreeGrafter"/>
</dbReference>
<dbReference type="GO" id="GO:0005525">
    <property type="term" value="F:GTP binding"/>
    <property type="evidence" value="ECO:0007669"/>
    <property type="project" value="UniProtKB-UniRule"/>
</dbReference>
<dbReference type="GO" id="GO:0003924">
    <property type="term" value="F:GTPase activity"/>
    <property type="evidence" value="ECO:0007669"/>
    <property type="project" value="InterPro"/>
</dbReference>
<dbReference type="GO" id="GO:0097216">
    <property type="term" value="F:guanosine tetraphosphate binding"/>
    <property type="evidence" value="ECO:0007669"/>
    <property type="project" value="UniProtKB-ARBA"/>
</dbReference>
<dbReference type="GO" id="GO:0016150">
    <property type="term" value="F:translation release factor activity, codon nonspecific"/>
    <property type="evidence" value="ECO:0007669"/>
    <property type="project" value="TreeGrafter"/>
</dbReference>
<dbReference type="GO" id="GO:0016149">
    <property type="term" value="F:translation release factor activity, codon specific"/>
    <property type="evidence" value="ECO:0007669"/>
    <property type="project" value="UniProtKB-UniRule"/>
</dbReference>
<dbReference type="GO" id="GO:0006449">
    <property type="term" value="P:regulation of translational termination"/>
    <property type="evidence" value="ECO:0007669"/>
    <property type="project" value="UniProtKB-UniRule"/>
</dbReference>
<dbReference type="CDD" id="cd04169">
    <property type="entry name" value="RF3"/>
    <property type="match status" value="1"/>
</dbReference>
<dbReference type="CDD" id="cd03689">
    <property type="entry name" value="RF3_II"/>
    <property type="match status" value="1"/>
</dbReference>
<dbReference type="CDD" id="cd16259">
    <property type="entry name" value="RF3_III"/>
    <property type="match status" value="1"/>
</dbReference>
<dbReference type="FunFam" id="2.40.30.10:FF:000040">
    <property type="entry name" value="Peptide chain release factor 3"/>
    <property type="match status" value="1"/>
</dbReference>
<dbReference type="FunFam" id="3.30.70.3280:FF:000001">
    <property type="entry name" value="Peptide chain release factor 3"/>
    <property type="match status" value="1"/>
</dbReference>
<dbReference type="FunFam" id="3.40.50.300:FF:000542">
    <property type="entry name" value="Peptide chain release factor 3"/>
    <property type="match status" value="1"/>
</dbReference>
<dbReference type="Gene3D" id="3.40.50.300">
    <property type="entry name" value="P-loop containing nucleotide triphosphate hydrolases"/>
    <property type="match status" value="2"/>
</dbReference>
<dbReference type="Gene3D" id="3.30.70.3280">
    <property type="entry name" value="Peptide chain release factor 3, domain III"/>
    <property type="match status" value="1"/>
</dbReference>
<dbReference type="HAMAP" id="MF_00072">
    <property type="entry name" value="Rel_fac_3"/>
    <property type="match status" value="1"/>
</dbReference>
<dbReference type="InterPro" id="IPR053905">
    <property type="entry name" value="EF-G-like_DII"/>
</dbReference>
<dbReference type="InterPro" id="IPR035647">
    <property type="entry name" value="EFG_III/V"/>
</dbReference>
<dbReference type="InterPro" id="IPR031157">
    <property type="entry name" value="G_TR_CS"/>
</dbReference>
<dbReference type="InterPro" id="IPR027417">
    <property type="entry name" value="P-loop_NTPase"/>
</dbReference>
<dbReference type="InterPro" id="IPR004548">
    <property type="entry name" value="PrfC"/>
</dbReference>
<dbReference type="InterPro" id="IPR032090">
    <property type="entry name" value="RF3_C"/>
</dbReference>
<dbReference type="InterPro" id="IPR038467">
    <property type="entry name" value="RF3_dom_3_sf"/>
</dbReference>
<dbReference type="InterPro" id="IPR041732">
    <property type="entry name" value="RF3_GTP-bd"/>
</dbReference>
<dbReference type="InterPro" id="IPR005225">
    <property type="entry name" value="Small_GTP-bd"/>
</dbReference>
<dbReference type="InterPro" id="IPR000795">
    <property type="entry name" value="T_Tr_GTP-bd_dom"/>
</dbReference>
<dbReference type="InterPro" id="IPR009000">
    <property type="entry name" value="Transl_B-barrel_sf"/>
</dbReference>
<dbReference type="NCBIfam" id="TIGR00503">
    <property type="entry name" value="prfC"/>
    <property type="match status" value="1"/>
</dbReference>
<dbReference type="NCBIfam" id="NF001964">
    <property type="entry name" value="PRK00741.1"/>
    <property type="match status" value="1"/>
</dbReference>
<dbReference type="NCBIfam" id="TIGR00231">
    <property type="entry name" value="small_GTP"/>
    <property type="match status" value="1"/>
</dbReference>
<dbReference type="PANTHER" id="PTHR43556">
    <property type="entry name" value="PEPTIDE CHAIN RELEASE FACTOR RF3"/>
    <property type="match status" value="1"/>
</dbReference>
<dbReference type="PANTHER" id="PTHR43556:SF2">
    <property type="entry name" value="PEPTIDE CHAIN RELEASE FACTOR RF3"/>
    <property type="match status" value="1"/>
</dbReference>
<dbReference type="Pfam" id="PF22042">
    <property type="entry name" value="EF-G_D2"/>
    <property type="match status" value="1"/>
</dbReference>
<dbReference type="Pfam" id="PF00009">
    <property type="entry name" value="GTP_EFTU"/>
    <property type="match status" value="1"/>
</dbReference>
<dbReference type="Pfam" id="PF16658">
    <property type="entry name" value="RF3_C"/>
    <property type="match status" value="1"/>
</dbReference>
<dbReference type="PRINTS" id="PR00315">
    <property type="entry name" value="ELONGATNFCT"/>
</dbReference>
<dbReference type="SUPFAM" id="SSF54980">
    <property type="entry name" value="EF-G C-terminal domain-like"/>
    <property type="match status" value="1"/>
</dbReference>
<dbReference type="SUPFAM" id="SSF52540">
    <property type="entry name" value="P-loop containing nucleoside triphosphate hydrolases"/>
    <property type="match status" value="1"/>
</dbReference>
<dbReference type="SUPFAM" id="SSF50447">
    <property type="entry name" value="Translation proteins"/>
    <property type="match status" value="1"/>
</dbReference>
<dbReference type="PROSITE" id="PS00301">
    <property type="entry name" value="G_TR_1"/>
    <property type="match status" value="1"/>
</dbReference>
<dbReference type="PROSITE" id="PS51722">
    <property type="entry name" value="G_TR_2"/>
    <property type="match status" value="1"/>
</dbReference>
<proteinExistence type="inferred from homology"/>
<comment type="function">
    <text evidence="1">Increases the formation of ribosomal termination complexes and stimulates activities of RF-1 and RF-2. It binds guanine nucleotides and has strong preference for UGA stop codons. It may interact directly with the ribosome. The stimulation of RF-1 and RF-2 is significantly reduced by GTP and GDP, but not by GMP.</text>
</comment>
<comment type="subcellular location">
    <subcellularLocation>
        <location evidence="1">Cytoplasm</location>
    </subcellularLocation>
</comment>
<comment type="similarity">
    <text evidence="1">Belongs to the TRAFAC class translation factor GTPase superfamily. Classic translation factor GTPase family. PrfC subfamily.</text>
</comment>
<organism>
    <name type="scientific">Coxiella burnetii (strain RSA 331 / Henzerling II)</name>
    <dbReference type="NCBI Taxonomy" id="360115"/>
    <lineage>
        <taxon>Bacteria</taxon>
        <taxon>Pseudomonadati</taxon>
        <taxon>Pseudomonadota</taxon>
        <taxon>Gammaproteobacteria</taxon>
        <taxon>Legionellales</taxon>
        <taxon>Coxiellaceae</taxon>
        <taxon>Coxiella</taxon>
    </lineage>
</organism>